<feature type="chain" id="PRO_0000126662" description="Phenylalanine--tRNA ligase alpha subunit">
    <location>
        <begin position="1"/>
        <end position="339"/>
    </location>
</feature>
<feature type="binding site" evidence="1">
    <location>
        <position position="250"/>
    </location>
    <ligand>
        <name>Mg(2+)</name>
        <dbReference type="ChEBI" id="CHEBI:18420"/>
        <note>shared with beta subunit</note>
    </ligand>
</feature>
<evidence type="ECO:0000255" key="1">
    <source>
        <dbReference type="HAMAP-Rule" id="MF_00281"/>
    </source>
</evidence>
<organism>
    <name type="scientific">Bacteroides fragilis (strain YCH46)</name>
    <dbReference type="NCBI Taxonomy" id="295405"/>
    <lineage>
        <taxon>Bacteria</taxon>
        <taxon>Pseudomonadati</taxon>
        <taxon>Bacteroidota</taxon>
        <taxon>Bacteroidia</taxon>
        <taxon>Bacteroidales</taxon>
        <taxon>Bacteroidaceae</taxon>
        <taxon>Bacteroides</taxon>
    </lineage>
</organism>
<dbReference type="EC" id="6.1.1.20" evidence="1"/>
<dbReference type="EMBL" id="AP006841">
    <property type="protein sequence ID" value="BAD50010.1"/>
    <property type="molecule type" value="Genomic_DNA"/>
</dbReference>
<dbReference type="RefSeq" id="WP_005789293.1">
    <property type="nucleotide sequence ID" value="NC_006347.1"/>
</dbReference>
<dbReference type="RefSeq" id="YP_100544.1">
    <property type="nucleotide sequence ID" value="NC_006347.1"/>
</dbReference>
<dbReference type="SMR" id="Q64R71"/>
<dbReference type="STRING" id="295405.BF3266"/>
<dbReference type="GeneID" id="60367745"/>
<dbReference type="KEGG" id="bfr:BF3266"/>
<dbReference type="PATRIC" id="fig|295405.11.peg.3137"/>
<dbReference type="HOGENOM" id="CLU_025086_0_1_10"/>
<dbReference type="OrthoDB" id="9800719at2"/>
<dbReference type="Proteomes" id="UP000002197">
    <property type="component" value="Chromosome"/>
</dbReference>
<dbReference type="GO" id="GO:0005737">
    <property type="term" value="C:cytoplasm"/>
    <property type="evidence" value="ECO:0007669"/>
    <property type="project" value="UniProtKB-SubCell"/>
</dbReference>
<dbReference type="GO" id="GO:0005524">
    <property type="term" value="F:ATP binding"/>
    <property type="evidence" value="ECO:0007669"/>
    <property type="project" value="UniProtKB-UniRule"/>
</dbReference>
<dbReference type="GO" id="GO:0000287">
    <property type="term" value="F:magnesium ion binding"/>
    <property type="evidence" value="ECO:0007669"/>
    <property type="project" value="UniProtKB-UniRule"/>
</dbReference>
<dbReference type="GO" id="GO:0004826">
    <property type="term" value="F:phenylalanine-tRNA ligase activity"/>
    <property type="evidence" value="ECO:0007669"/>
    <property type="project" value="UniProtKB-UniRule"/>
</dbReference>
<dbReference type="GO" id="GO:0000049">
    <property type="term" value="F:tRNA binding"/>
    <property type="evidence" value="ECO:0007669"/>
    <property type="project" value="InterPro"/>
</dbReference>
<dbReference type="GO" id="GO:0006432">
    <property type="term" value="P:phenylalanyl-tRNA aminoacylation"/>
    <property type="evidence" value="ECO:0007669"/>
    <property type="project" value="UniProtKB-UniRule"/>
</dbReference>
<dbReference type="CDD" id="cd00496">
    <property type="entry name" value="PheRS_alpha_core"/>
    <property type="match status" value="1"/>
</dbReference>
<dbReference type="FunFam" id="3.30.930.10:FF:000003">
    <property type="entry name" value="Phenylalanine--tRNA ligase alpha subunit"/>
    <property type="match status" value="1"/>
</dbReference>
<dbReference type="Gene3D" id="3.30.930.10">
    <property type="entry name" value="Bira Bifunctional Protein, Domain 2"/>
    <property type="match status" value="1"/>
</dbReference>
<dbReference type="HAMAP" id="MF_00281">
    <property type="entry name" value="Phe_tRNA_synth_alpha1"/>
    <property type="match status" value="1"/>
</dbReference>
<dbReference type="InterPro" id="IPR006195">
    <property type="entry name" value="aa-tRNA-synth_II"/>
</dbReference>
<dbReference type="InterPro" id="IPR045864">
    <property type="entry name" value="aa-tRNA-synth_II/BPL/LPL"/>
</dbReference>
<dbReference type="InterPro" id="IPR004529">
    <property type="entry name" value="Phe-tRNA-synth_IIc_asu"/>
</dbReference>
<dbReference type="InterPro" id="IPR004188">
    <property type="entry name" value="Phe-tRNA_ligase_II_N"/>
</dbReference>
<dbReference type="InterPro" id="IPR022911">
    <property type="entry name" value="Phe_tRNA_ligase_alpha1_bac"/>
</dbReference>
<dbReference type="InterPro" id="IPR002319">
    <property type="entry name" value="Phenylalanyl-tRNA_Synthase"/>
</dbReference>
<dbReference type="InterPro" id="IPR010978">
    <property type="entry name" value="tRNA-bd_arm"/>
</dbReference>
<dbReference type="NCBIfam" id="TIGR00468">
    <property type="entry name" value="pheS"/>
    <property type="match status" value="1"/>
</dbReference>
<dbReference type="PANTHER" id="PTHR11538:SF41">
    <property type="entry name" value="PHENYLALANINE--TRNA LIGASE, MITOCHONDRIAL"/>
    <property type="match status" value="1"/>
</dbReference>
<dbReference type="PANTHER" id="PTHR11538">
    <property type="entry name" value="PHENYLALANYL-TRNA SYNTHETASE"/>
    <property type="match status" value="1"/>
</dbReference>
<dbReference type="Pfam" id="PF02912">
    <property type="entry name" value="Phe_tRNA-synt_N"/>
    <property type="match status" value="1"/>
</dbReference>
<dbReference type="Pfam" id="PF01409">
    <property type="entry name" value="tRNA-synt_2d"/>
    <property type="match status" value="1"/>
</dbReference>
<dbReference type="SUPFAM" id="SSF55681">
    <property type="entry name" value="Class II aaRS and biotin synthetases"/>
    <property type="match status" value="1"/>
</dbReference>
<dbReference type="SUPFAM" id="SSF46589">
    <property type="entry name" value="tRNA-binding arm"/>
    <property type="match status" value="1"/>
</dbReference>
<dbReference type="PROSITE" id="PS50862">
    <property type="entry name" value="AA_TRNA_LIGASE_II"/>
    <property type="match status" value="1"/>
</dbReference>
<keyword id="KW-0030">Aminoacyl-tRNA synthetase</keyword>
<keyword id="KW-0067">ATP-binding</keyword>
<keyword id="KW-0963">Cytoplasm</keyword>
<keyword id="KW-0436">Ligase</keyword>
<keyword id="KW-0460">Magnesium</keyword>
<keyword id="KW-0479">Metal-binding</keyword>
<keyword id="KW-0547">Nucleotide-binding</keyword>
<keyword id="KW-0648">Protein biosynthesis</keyword>
<sequence>MIAKINQLLEEVGALKAANAEELEVLRIKYLSKKGAINDLMADFRNVAAEQKKEVGMKLNELKTKAQEKINALKEQFDNQDNGQDDLDLTRSAYPVELGTRHPLSIVRNEIIDIFARLGFNIAEGPEIEDDWHVFSALNFAEDHPARDMQDTFFIESHPDVLLRTHTSSVQSRVMEVSQPPIRIICPGRVYRNEAISYRAHCFFHQVEALYVDRNVSFTDLKQVLLLFAKEMFGADTKIRLRPSYFPFTEPSAEMDISCNICGGKGCPFCKHTGWVEILGCGMVDPNVLDANGIDSKVYSGYALGMGIERITNLKYQVKDLRMFSENDTRFLKEFEAAY</sequence>
<name>SYFA_BACFR</name>
<gene>
    <name evidence="1" type="primary">pheS</name>
    <name type="ordered locus">BF3266</name>
</gene>
<reference key="1">
    <citation type="journal article" date="2004" name="Proc. Natl. Acad. Sci. U.S.A.">
        <title>Genomic analysis of Bacteroides fragilis reveals extensive DNA inversions regulating cell surface adaptation.</title>
        <authorList>
            <person name="Kuwahara T."/>
            <person name="Yamashita A."/>
            <person name="Hirakawa H."/>
            <person name="Nakayama H."/>
            <person name="Toh H."/>
            <person name="Okada N."/>
            <person name="Kuhara S."/>
            <person name="Hattori M."/>
            <person name="Hayashi T."/>
            <person name="Ohnishi Y."/>
        </authorList>
    </citation>
    <scope>NUCLEOTIDE SEQUENCE [LARGE SCALE GENOMIC DNA]</scope>
    <source>
        <strain>YCH46</strain>
    </source>
</reference>
<proteinExistence type="inferred from homology"/>
<comment type="catalytic activity">
    <reaction evidence="1">
        <text>tRNA(Phe) + L-phenylalanine + ATP = L-phenylalanyl-tRNA(Phe) + AMP + diphosphate + H(+)</text>
        <dbReference type="Rhea" id="RHEA:19413"/>
        <dbReference type="Rhea" id="RHEA-COMP:9668"/>
        <dbReference type="Rhea" id="RHEA-COMP:9699"/>
        <dbReference type="ChEBI" id="CHEBI:15378"/>
        <dbReference type="ChEBI" id="CHEBI:30616"/>
        <dbReference type="ChEBI" id="CHEBI:33019"/>
        <dbReference type="ChEBI" id="CHEBI:58095"/>
        <dbReference type="ChEBI" id="CHEBI:78442"/>
        <dbReference type="ChEBI" id="CHEBI:78531"/>
        <dbReference type="ChEBI" id="CHEBI:456215"/>
        <dbReference type="EC" id="6.1.1.20"/>
    </reaction>
</comment>
<comment type="cofactor">
    <cofactor evidence="1">
        <name>Mg(2+)</name>
        <dbReference type="ChEBI" id="CHEBI:18420"/>
    </cofactor>
    <text evidence="1">Binds 2 magnesium ions per tetramer.</text>
</comment>
<comment type="subunit">
    <text evidence="1">Tetramer of two alpha and two beta subunits.</text>
</comment>
<comment type="subcellular location">
    <subcellularLocation>
        <location evidence="1">Cytoplasm</location>
    </subcellularLocation>
</comment>
<comment type="similarity">
    <text evidence="1">Belongs to the class-II aminoacyl-tRNA synthetase family. Phe-tRNA synthetase alpha subunit type 1 subfamily.</text>
</comment>
<accession>Q64R71</accession>
<protein>
    <recommendedName>
        <fullName evidence="1">Phenylalanine--tRNA ligase alpha subunit</fullName>
        <ecNumber evidence="1">6.1.1.20</ecNumber>
    </recommendedName>
    <alternativeName>
        <fullName evidence="1">Phenylalanyl-tRNA synthetase alpha subunit</fullName>
        <shortName evidence="1">PheRS</shortName>
    </alternativeName>
</protein>